<evidence type="ECO:0000250" key="1"/>
<evidence type="ECO:0000250" key="2">
    <source>
        <dbReference type="UniProtKB" id="A0JN39"/>
    </source>
</evidence>
<evidence type="ECO:0000250" key="3">
    <source>
        <dbReference type="UniProtKB" id="P23514"/>
    </source>
</evidence>
<evidence type="ECO:0000250" key="4">
    <source>
        <dbReference type="UniProtKB" id="P53618"/>
    </source>
</evidence>
<evidence type="ECO:0000250" key="5">
    <source>
        <dbReference type="UniProtKB" id="Q9JIF7"/>
    </source>
</evidence>
<evidence type="ECO:0000255" key="6"/>
<evidence type="ECO:0000269" key="7">
    <source>
    </source>
</evidence>
<evidence type="ECO:0000305" key="8"/>
<evidence type="ECO:0000312" key="9">
    <source>
        <dbReference type="EMBL" id="ACZ15983.1"/>
    </source>
</evidence>
<proteinExistence type="evidence at transcript level"/>
<reference evidence="8 9" key="1">
    <citation type="journal article" date="2010" name="Mol. Biol. Rep.">
        <title>Investigation of LDHA and COPB1 as candidate genes for muscle development in the MYOD1 region of pig chromosome 2.</title>
        <authorList>
            <person name="Qiu H."/>
            <person name="Xu X."/>
            <person name="Fan B."/>
            <person name="Rothschild M.F."/>
            <person name="Martin Y."/>
            <person name="Liu B."/>
        </authorList>
    </citation>
    <scope>NUCLEOTIDE SEQUENCE [MRNA]</scope>
    <scope>TISSUE SPECIFICITY</scope>
</reference>
<accession>D2SW95</accession>
<keyword id="KW-0007">Acetylation</keyword>
<keyword id="KW-1003">Cell membrane</keyword>
<keyword id="KW-0963">Cytoplasm</keyword>
<keyword id="KW-0968">Cytoplasmic vesicle</keyword>
<keyword id="KW-0931">ER-Golgi transport</keyword>
<keyword id="KW-0333">Golgi apparatus</keyword>
<keyword id="KW-0472">Membrane</keyword>
<keyword id="KW-0653">Protein transport</keyword>
<keyword id="KW-1185">Reference proteome</keyword>
<keyword id="KW-0677">Repeat</keyword>
<keyword id="KW-0813">Transport</keyword>
<comment type="function">
    <text evidence="2 3 4 5">The coatomer is a cytosolic protein complex that binds to dilysine motifs and reversibly associates with Golgi non-clathrin-coated vesicles, which further mediate biosynthetic protein transport from the ER, via the Golgi up to the trans Golgi network. Coatomer complex is required for budding from Golgi membranes, and is essential for the retrograde Golgi-to-ER transport of dilysine-tagged proteins. In mammals, the coatomer can only be recruited by membranes associated to ADP-ribosylation factors (ARFs), which are small GTP-binding proteins; the complex also influences the Golgi structural integrity, as well as the processing, activity, and endocytic recycling of LDL receptors. Plays a functional role in facilitating the transport of kappa-type opioid receptor mRNAs into axons and enhances translation of these proteins. Required for limiting lipid storage in lipid droplets. Involved in lipid homeostasis by regulating the presence of perilipin family members PLIN2 and PLIN3 at the lipid droplet surface and promoting the association of adipocyte surface triglyceride lipase (PNPLA2) with the lipid droplet to mediate lipolysis. Involved in the Golgi disassembly and reassembly processes during cell cycle. Involved in autophagy by playing a role in early endosome function. Plays a role in organellar compartmentalization of secretory compartments including endoplasmic reticulum (ER)-Golgi intermediate compartment (ERGIC), Golgi, trans-Golgi network (TGN) and recycling endosomes, and in biosynthetic transport of CAV1 (By similarity).</text>
</comment>
<comment type="subunit">
    <text evidence="3 4 5">Oligomeric complex that consists of at least the alpha, beta, beta', gamma, delta, epsilon and zeta subunits. Interacts with CAPN8 and PRKCE. Interacts with SCYL1. Interacts with COPG1. Interacts with ARF1 (myristoylated); this interaction is required for binding of COPB1 to Golgi membranes. Interacts (via trunk domain) with ARF1 (via switch I region); the interaction is direct. Interacts with KCNK2 (via N-terminus); this interaction increases the channel-mediated whole cell currents and promotes plasma membrane expression of KCNK2. Interacts with STX17. Interacts with TMEM115 (By similarity). Interacts with TMEM41B (By similarity).</text>
</comment>
<comment type="subcellular location">
    <subcellularLocation>
        <location evidence="2 3 4 5">Cytoplasm</location>
    </subcellularLocation>
    <subcellularLocation>
        <location evidence="2 3 4 5">Golgi apparatus membrane</location>
        <topology evidence="2 3 4 5">Peripheral membrane protein</topology>
        <orientation evidence="2 3 4 5">Cytoplasmic side</orientation>
    </subcellularLocation>
    <subcellularLocation>
        <location evidence="2 3 4 5">Cytoplasmic vesicle</location>
        <location evidence="2 3 4 5">COPI-coated vesicle membrane</location>
        <topology evidence="2 3 4 5">Peripheral membrane protein</topology>
        <orientation evidence="2 3 4 5">Cytoplasmic side</orientation>
    </subcellularLocation>
    <subcellularLocation>
        <location evidence="2 3 4 5">Cell membrane</location>
    </subcellularLocation>
    <subcellularLocation>
        <location evidence="2 3 4 5">Endoplasmic reticulum-Golgi intermediate compartment</location>
    </subcellularLocation>
    <text evidence="1">The coatomer is cytoplasmic or polymerized on the cytoplasmic side of the Golgi, as well as on the vesicles/buds originating from it. Proteolytic cleavage by CAPN8 triggers translocation from Golgi to cytoplasm. Found in perinuclear vesicular-tubular clusters (VTCs) and in the Golgi region where associated with vesicles, buds and rims of the Golgi stack. Occassionally present at the trans- side of Golgi, but mainly present at the cis-Golgi side in transitional areas (TA), on so-called peripheral elements (PE) consisting of tubules and vesicles located between the cup-shaped transitional elements (TE) of the rough endoplasmic reticulum (RER) and the cis-most Golgi cisternae. Present in cytoplasm, not associated with visible coats or membranes, with a minor fraction present on small clusters of tubules and vesicles. Some association with high-density and low-density microsomes and mitochondria/nuclei fraction. Very little found in plasma membrane fraction.</text>
</comment>
<comment type="tissue specificity">
    <text evidence="7">High expression in the lung, kidney, skeletal muscle and small intestine, and lower level of expression in heart, liver, spleen, stomach and fat.</text>
</comment>
<comment type="miscellaneous">
    <text evidence="4">Brefeldin A induces dissociation from the Golgi of the beta-COP and presumably the other coatomer subunits.</text>
</comment>
<comment type="miscellaneous">
    <text evidence="7">Important candidate gene for meat quality and growth traits in animal breeding. May also be useful for the research of muscle development mechanisms.</text>
</comment>
<sequence length="953" mass="107123">MTAAENVCYTLINVPMDSEPPSEISLKNDLEKGDVKSKTEALKKVIIMILNGEKLPGLLMTIIRFVLPLQDHTIKKLLLVFWEIVPKTTPDGRLLHEMILVCDAYRKDLQHPNEFIRGSTLRFLCKLKEAELLEPLMPAIRACLEHRHSYVRRNAVLAIYTIYRNFEHLIPDAPELIHDFLVNEKDASCKRNAFMMLIHADQDRALDYLSTCIDQVQTFGDILQLVIVELIYKVCHANPSERARFIRCIYNLLQSSSPAVKYEAAGTLVTLSSAPTAIKAAAQCYIDLIIKESDNNVKLIVLDRLIELKEHPAHERVLQDLVMDILRVLSTPDLEVRKKTLQLALDLVSSRNVEELVIVLKKEVIKTNNVSEHEDTDKYRQLLVRTLHSCSVRFPDMAANVIPVLMEFLSDSNEAAAADVLEFVREAIQRFDNLRMLIVEKMLEVFHAIKSVKIYRGALWILGEYCSTKEDIQSVMTEVRRSLGEIPIVESEIKKEAGELKPEEEITVGPVQKLVTKMGTYATQSALSSSRPTKKEEERPPLRGFLLDGDFFVAASLATTLTKIALRYVALVQEKKRQNSFVAEAMLLMATILHLGKSSPPKKPITDDDVDRISLCLKVLSECSPLMNDIFNKECRQSLSHMLSAKLEEEKLSQKKESEKRNVTVQPDDPISFMQLTAKNEMNCKEDQFQLSLLAAMGNTQRKEAADPLASKLNKVTQLTGFSDPVYAEAYVHVNQYDIVLDVLVVNQTSDTLQNCTLELATLGDLKLVEKPSPLTLAPHDFANIKANVKVASTENGIIFGNIVYDVSGAASDRNCVVLSDIHIDIMDYIQPATCTDAEFRQMWAEFEWENKVTVNTNIIDLNDYLQHILKSTNMKCLTPEKALSGYCGFMAANLYARSIFGEDALANVSIEKPIQQGPEAPVTGHIRIRAKGQGMALSLGDKINLSQKKTSI</sequence>
<feature type="initiator methionine" description="Removed" evidence="4">
    <location>
        <position position="1"/>
    </location>
</feature>
<feature type="chain" id="PRO_0000408943" description="Coatomer subunit beta">
    <location>
        <begin position="2"/>
        <end position="953"/>
    </location>
</feature>
<feature type="repeat" description="HEAT 1" evidence="6">
    <location>
        <begin position="96"/>
        <end position="131"/>
    </location>
</feature>
<feature type="repeat" description="HEAT 2" evidence="6">
    <location>
        <begin position="132"/>
        <end position="168"/>
    </location>
</feature>
<feature type="repeat" description="HEAT 3" evidence="6">
    <location>
        <begin position="240"/>
        <end position="276"/>
    </location>
</feature>
<feature type="repeat" description="HEAT 4" evidence="6">
    <location>
        <begin position="277"/>
        <end position="314"/>
    </location>
</feature>
<feature type="repeat" description="HEAT 5" evidence="6">
    <location>
        <begin position="316"/>
        <end position="353"/>
    </location>
</feature>
<feature type="repeat" description="HEAT 6" evidence="6">
    <location>
        <begin position="396"/>
        <end position="433"/>
    </location>
</feature>
<feature type="modified residue" description="N-acetylthreonine" evidence="4">
    <location>
        <position position="2"/>
    </location>
</feature>
<feature type="modified residue" description="N6-acetyllysine" evidence="5">
    <location>
        <position position="494"/>
    </location>
</feature>
<organism>
    <name type="scientific">Sus scrofa</name>
    <name type="common">Pig</name>
    <dbReference type="NCBI Taxonomy" id="9823"/>
    <lineage>
        <taxon>Eukaryota</taxon>
        <taxon>Metazoa</taxon>
        <taxon>Chordata</taxon>
        <taxon>Craniata</taxon>
        <taxon>Vertebrata</taxon>
        <taxon>Euteleostomi</taxon>
        <taxon>Mammalia</taxon>
        <taxon>Eutheria</taxon>
        <taxon>Laurasiatheria</taxon>
        <taxon>Artiodactyla</taxon>
        <taxon>Suina</taxon>
        <taxon>Suidae</taxon>
        <taxon>Sus</taxon>
    </lineage>
</organism>
<gene>
    <name evidence="2" type="primary">COPB1</name>
</gene>
<dbReference type="EMBL" id="FJ865397">
    <property type="protein sequence ID" value="ACZ15983.1"/>
    <property type="molecule type" value="mRNA"/>
</dbReference>
<dbReference type="RefSeq" id="NP_001165837.1">
    <property type="nucleotide sequence ID" value="NM_001172366.1"/>
</dbReference>
<dbReference type="SMR" id="D2SW95"/>
<dbReference type="FunCoup" id="D2SW95">
    <property type="interactions" value="2471"/>
</dbReference>
<dbReference type="STRING" id="9823.ENSSSCP00000014234"/>
<dbReference type="PaxDb" id="9823-ENSSSCP00000014234"/>
<dbReference type="PeptideAtlas" id="D2SW95"/>
<dbReference type="GeneID" id="100337660"/>
<dbReference type="KEGG" id="ssc:100337660"/>
<dbReference type="CTD" id="1315"/>
<dbReference type="eggNOG" id="KOG1058">
    <property type="taxonomic scope" value="Eukaryota"/>
</dbReference>
<dbReference type="InParanoid" id="D2SW95"/>
<dbReference type="OrthoDB" id="10261439at2759"/>
<dbReference type="Proteomes" id="UP000008227">
    <property type="component" value="Unplaced"/>
</dbReference>
<dbReference type="Proteomes" id="UP000314985">
    <property type="component" value="Unplaced"/>
</dbReference>
<dbReference type="Proteomes" id="UP000694570">
    <property type="component" value="Unplaced"/>
</dbReference>
<dbReference type="Proteomes" id="UP000694571">
    <property type="component" value="Unplaced"/>
</dbReference>
<dbReference type="Proteomes" id="UP000694720">
    <property type="component" value="Unplaced"/>
</dbReference>
<dbReference type="Proteomes" id="UP000694722">
    <property type="component" value="Unplaced"/>
</dbReference>
<dbReference type="Proteomes" id="UP000694723">
    <property type="component" value="Unplaced"/>
</dbReference>
<dbReference type="Proteomes" id="UP000694724">
    <property type="component" value="Unplaced"/>
</dbReference>
<dbReference type="Proteomes" id="UP000694725">
    <property type="component" value="Unplaced"/>
</dbReference>
<dbReference type="Proteomes" id="UP000694726">
    <property type="component" value="Unplaced"/>
</dbReference>
<dbReference type="Proteomes" id="UP000694727">
    <property type="component" value="Unplaced"/>
</dbReference>
<dbReference type="Proteomes" id="UP000694728">
    <property type="component" value="Unplaced"/>
</dbReference>
<dbReference type="GO" id="GO:0030126">
    <property type="term" value="C:COPI vesicle coat"/>
    <property type="evidence" value="ECO:0000318"/>
    <property type="project" value="GO_Central"/>
</dbReference>
<dbReference type="GO" id="GO:0005793">
    <property type="term" value="C:endoplasmic reticulum-Golgi intermediate compartment"/>
    <property type="evidence" value="ECO:0007669"/>
    <property type="project" value="UniProtKB-SubCell"/>
</dbReference>
<dbReference type="GO" id="GO:0000139">
    <property type="term" value="C:Golgi membrane"/>
    <property type="evidence" value="ECO:0007669"/>
    <property type="project" value="UniProtKB-SubCell"/>
</dbReference>
<dbReference type="GO" id="GO:0005886">
    <property type="term" value="C:plasma membrane"/>
    <property type="evidence" value="ECO:0007669"/>
    <property type="project" value="UniProtKB-SubCell"/>
</dbReference>
<dbReference type="GO" id="GO:0005198">
    <property type="term" value="F:structural molecule activity"/>
    <property type="evidence" value="ECO:0007669"/>
    <property type="project" value="InterPro"/>
</dbReference>
<dbReference type="GO" id="GO:0006888">
    <property type="term" value="P:endoplasmic reticulum to Golgi vesicle-mediated transport"/>
    <property type="evidence" value="ECO:0000318"/>
    <property type="project" value="GO_Central"/>
</dbReference>
<dbReference type="GO" id="GO:0006891">
    <property type="term" value="P:intra-Golgi vesicle-mediated transport"/>
    <property type="evidence" value="ECO:0000318"/>
    <property type="project" value="GO_Central"/>
</dbReference>
<dbReference type="GO" id="GO:0006886">
    <property type="term" value="P:intracellular protein transport"/>
    <property type="evidence" value="ECO:0007669"/>
    <property type="project" value="InterPro"/>
</dbReference>
<dbReference type="Gene3D" id="1.25.10.10">
    <property type="entry name" value="Leucine-rich Repeat Variant"/>
    <property type="match status" value="1"/>
</dbReference>
<dbReference type="InterPro" id="IPR011989">
    <property type="entry name" value="ARM-like"/>
</dbReference>
<dbReference type="InterPro" id="IPR016024">
    <property type="entry name" value="ARM-type_fold"/>
</dbReference>
<dbReference type="InterPro" id="IPR002553">
    <property type="entry name" value="Clathrin/coatomer_adapt-like_N"/>
</dbReference>
<dbReference type="InterPro" id="IPR011710">
    <property type="entry name" value="Coatomer_bsu_C"/>
</dbReference>
<dbReference type="InterPro" id="IPR016460">
    <property type="entry name" value="COPB1"/>
</dbReference>
<dbReference type="InterPro" id="IPR029446">
    <property type="entry name" value="COPB1_appendage_platform_dom"/>
</dbReference>
<dbReference type="PANTHER" id="PTHR10635">
    <property type="entry name" value="COATOMER SUBUNIT BETA"/>
    <property type="match status" value="1"/>
</dbReference>
<dbReference type="PANTHER" id="PTHR10635:SF0">
    <property type="entry name" value="COATOMER SUBUNIT BETA"/>
    <property type="match status" value="1"/>
</dbReference>
<dbReference type="Pfam" id="PF01602">
    <property type="entry name" value="Adaptin_N"/>
    <property type="match status" value="1"/>
</dbReference>
<dbReference type="Pfam" id="PF07718">
    <property type="entry name" value="Coatamer_beta_C"/>
    <property type="match status" value="1"/>
</dbReference>
<dbReference type="Pfam" id="PF14806">
    <property type="entry name" value="Coatomer_b_Cpla"/>
    <property type="match status" value="1"/>
</dbReference>
<dbReference type="PIRSF" id="PIRSF005727">
    <property type="entry name" value="Coatomer_beta_subunit"/>
    <property type="match status" value="1"/>
</dbReference>
<dbReference type="SUPFAM" id="SSF48371">
    <property type="entry name" value="ARM repeat"/>
    <property type="match status" value="1"/>
</dbReference>
<protein>
    <recommendedName>
        <fullName evidence="2">Coatomer subunit beta</fullName>
    </recommendedName>
    <alternativeName>
        <fullName evidence="2">Beta-coat protein</fullName>
        <shortName evidence="2">Beta-COP</shortName>
    </alternativeName>
</protein>
<name>COPB_PIG</name>